<sequence>MVTIRADEISNIIRERIQHYTKKINILNTGTVLQVGDGIVRIYGLDEVMAGELIEFEEGTKGIALNLESKNVGVVLMGDGLRIKEGGSVKATGRIAQVPVGDAYLGRVINALATPIDGRGEILSSEFRLIDSPAPGILSRRSIYEPLQTGLIAIDSMIPIGRGQRELIIGDRQTGKTAVATDTILNQQSQNIICVYVAIGQKASSVAQVVTTLQEKGALQYTIVVAEMADSAATLQYLAPYTGAALAEYFMYKERHTLIIYDDLSKQAQAYRQMSLLLRRPPGREAYPGDVFYLHSRLLERAAKLSSKLGEGSMTALPIVETQSGDVSAYIPTNVISITDGQIFLSADLFNAGLRPAINVGISVSRVGSAAQIKAMKQVASKLKLELAQFAELEAFAQFASDLDQASQNLLARGQRLRELLKQSQSAPLTTAEQIMSIYAGINGYLDSLELGQIGKFLRELSDYLKVNKPRFQEIINSTKTFTEEAEAILKDTIPSEKDRFLREGKI</sequence>
<reference key="1">
    <citation type="journal article" date="2007" name="BMC Plant Biol.">
        <title>Complete plastid genome sequences suggest strong selection for retention of photosynthetic genes in the parasitic plant genus Cuscuta.</title>
        <authorList>
            <person name="McNeal J.R."/>
            <person name="Kuehl J.V."/>
            <person name="Boore J.L."/>
            <person name="dePamphilis C.W."/>
        </authorList>
    </citation>
    <scope>NUCLEOTIDE SEQUENCE [LARGE SCALE GENOMIC DNA]</scope>
</reference>
<geneLocation type="plastid"/>
<dbReference type="EC" id="7.1.2.2" evidence="2"/>
<dbReference type="EMBL" id="EU189133">
    <property type="protein sequence ID" value="ABW20550.1"/>
    <property type="molecule type" value="Genomic_DNA"/>
</dbReference>
<dbReference type="RefSeq" id="YP_001531205.1">
    <property type="nucleotide sequence ID" value="NC_009949.1"/>
</dbReference>
<dbReference type="SMR" id="A8W3H5"/>
<dbReference type="GeneID" id="5714830"/>
<dbReference type="GO" id="GO:0042170">
    <property type="term" value="C:plastid membrane"/>
    <property type="evidence" value="ECO:0007669"/>
    <property type="project" value="UniProtKB-SubCell"/>
</dbReference>
<dbReference type="GO" id="GO:0045259">
    <property type="term" value="C:proton-transporting ATP synthase complex"/>
    <property type="evidence" value="ECO:0007669"/>
    <property type="project" value="UniProtKB-KW"/>
</dbReference>
<dbReference type="GO" id="GO:0043531">
    <property type="term" value="F:ADP binding"/>
    <property type="evidence" value="ECO:0007669"/>
    <property type="project" value="TreeGrafter"/>
</dbReference>
<dbReference type="GO" id="GO:0005524">
    <property type="term" value="F:ATP binding"/>
    <property type="evidence" value="ECO:0007669"/>
    <property type="project" value="UniProtKB-KW"/>
</dbReference>
<dbReference type="GO" id="GO:0046933">
    <property type="term" value="F:proton-transporting ATP synthase activity, rotational mechanism"/>
    <property type="evidence" value="ECO:0007669"/>
    <property type="project" value="InterPro"/>
</dbReference>
<dbReference type="CDD" id="cd18113">
    <property type="entry name" value="ATP-synt_F1_alpha_C"/>
    <property type="match status" value="1"/>
</dbReference>
<dbReference type="CDD" id="cd18116">
    <property type="entry name" value="ATP-synt_F1_alpha_N"/>
    <property type="match status" value="1"/>
</dbReference>
<dbReference type="CDD" id="cd01132">
    <property type="entry name" value="F1-ATPase_alpha_CD"/>
    <property type="match status" value="1"/>
</dbReference>
<dbReference type="FunFam" id="1.20.150.20:FF:000001">
    <property type="entry name" value="ATP synthase subunit alpha"/>
    <property type="match status" value="1"/>
</dbReference>
<dbReference type="FunFam" id="2.40.30.20:FF:000001">
    <property type="entry name" value="ATP synthase subunit alpha"/>
    <property type="match status" value="1"/>
</dbReference>
<dbReference type="FunFam" id="3.40.50.300:FF:000002">
    <property type="entry name" value="ATP synthase subunit alpha"/>
    <property type="match status" value="1"/>
</dbReference>
<dbReference type="Gene3D" id="2.40.30.20">
    <property type="match status" value="1"/>
</dbReference>
<dbReference type="Gene3D" id="1.20.150.20">
    <property type="entry name" value="ATP synthase alpha/beta chain, C-terminal domain"/>
    <property type="match status" value="1"/>
</dbReference>
<dbReference type="Gene3D" id="3.40.50.300">
    <property type="entry name" value="P-loop containing nucleotide triphosphate hydrolases"/>
    <property type="match status" value="1"/>
</dbReference>
<dbReference type="HAMAP" id="MF_01346">
    <property type="entry name" value="ATP_synth_alpha_bact"/>
    <property type="match status" value="1"/>
</dbReference>
<dbReference type="InterPro" id="IPR023366">
    <property type="entry name" value="ATP_synth_asu-like_sf"/>
</dbReference>
<dbReference type="InterPro" id="IPR000793">
    <property type="entry name" value="ATP_synth_asu_C"/>
</dbReference>
<dbReference type="InterPro" id="IPR038376">
    <property type="entry name" value="ATP_synth_asu_C_sf"/>
</dbReference>
<dbReference type="InterPro" id="IPR033732">
    <property type="entry name" value="ATP_synth_F1_a_nt-bd_dom"/>
</dbReference>
<dbReference type="InterPro" id="IPR005294">
    <property type="entry name" value="ATP_synth_F1_asu"/>
</dbReference>
<dbReference type="InterPro" id="IPR020003">
    <property type="entry name" value="ATPase_a/bsu_AS"/>
</dbReference>
<dbReference type="InterPro" id="IPR004100">
    <property type="entry name" value="ATPase_F1/V1/A1_a/bsu_N"/>
</dbReference>
<dbReference type="InterPro" id="IPR036121">
    <property type="entry name" value="ATPase_F1/V1/A1_a/bsu_N_sf"/>
</dbReference>
<dbReference type="InterPro" id="IPR000194">
    <property type="entry name" value="ATPase_F1/V1/A1_a/bsu_nucl-bd"/>
</dbReference>
<dbReference type="InterPro" id="IPR027417">
    <property type="entry name" value="P-loop_NTPase"/>
</dbReference>
<dbReference type="NCBIfam" id="TIGR00962">
    <property type="entry name" value="atpA"/>
    <property type="match status" value="1"/>
</dbReference>
<dbReference type="NCBIfam" id="NF009884">
    <property type="entry name" value="PRK13343.1"/>
    <property type="match status" value="1"/>
</dbReference>
<dbReference type="PANTHER" id="PTHR48082">
    <property type="entry name" value="ATP SYNTHASE SUBUNIT ALPHA, MITOCHONDRIAL"/>
    <property type="match status" value="1"/>
</dbReference>
<dbReference type="PANTHER" id="PTHR48082:SF2">
    <property type="entry name" value="ATP SYNTHASE SUBUNIT ALPHA, MITOCHONDRIAL"/>
    <property type="match status" value="1"/>
</dbReference>
<dbReference type="Pfam" id="PF00006">
    <property type="entry name" value="ATP-synt_ab"/>
    <property type="match status" value="1"/>
</dbReference>
<dbReference type="Pfam" id="PF00306">
    <property type="entry name" value="ATP-synt_ab_C"/>
    <property type="match status" value="1"/>
</dbReference>
<dbReference type="Pfam" id="PF02874">
    <property type="entry name" value="ATP-synt_ab_N"/>
    <property type="match status" value="1"/>
</dbReference>
<dbReference type="PIRSF" id="PIRSF039088">
    <property type="entry name" value="F_ATPase_subunit_alpha"/>
    <property type="match status" value="1"/>
</dbReference>
<dbReference type="SUPFAM" id="SSF47917">
    <property type="entry name" value="C-terminal domain of alpha and beta subunits of F1 ATP synthase"/>
    <property type="match status" value="1"/>
</dbReference>
<dbReference type="SUPFAM" id="SSF50615">
    <property type="entry name" value="N-terminal domain of alpha and beta subunits of F1 ATP synthase"/>
    <property type="match status" value="1"/>
</dbReference>
<dbReference type="SUPFAM" id="SSF52540">
    <property type="entry name" value="P-loop containing nucleoside triphosphate hydrolases"/>
    <property type="match status" value="1"/>
</dbReference>
<dbReference type="PROSITE" id="PS00152">
    <property type="entry name" value="ATPASE_ALPHA_BETA"/>
    <property type="match status" value="1"/>
</dbReference>
<comment type="function">
    <text evidence="2">Produces ATP from ADP in the presence of a proton gradient across the membrane. The alpha chain is a regulatory subunit.</text>
</comment>
<comment type="catalytic activity">
    <reaction evidence="2">
        <text>ATP + H2O + 4 H(+)(in) = ADP + phosphate + 5 H(+)(out)</text>
        <dbReference type="Rhea" id="RHEA:57720"/>
        <dbReference type="ChEBI" id="CHEBI:15377"/>
        <dbReference type="ChEBI" id="CHEBI:15378"/>
        <dbReference type="ChEBI" id="CHEBI:30616"/>
        <dbReference type="ChEBI" id="CHEBI:43474"/>
        <dbReference type="ChEBI" id="CHEBI:456216"/>
        <dbReference type="EC" id="7.1.2.2"/>
    </reaction>
</comment>
<comment type="subunit">
    <text evidence="2">F-type ATPases have 2 components, CF(1) - the catalytic core - and CF(0) - the membrane proton channel. CF(1) has five subunits: alpha(3), beta(3), gamma(1), delta(1), epsilon(1). CF(0) has four main subunits: a, b, b' and c.</text>
</comment>
<comment type="subcellular location">
    <subcellularLocation>
        <location evidence="1">Plastid membrane</location>
        <topology evidence="2">Peripheral membrane protein</topology>
    </subcellularLocation>
</comment>
<comment type="similarity">
    <text evidence="2">Belongs to the ATPase alpha/beta chains family.</text>
</comment>
<comment type="caution">
    <text evidence="3">Only inflorescences, fruits, starved seedlings and stressed stem tips are green in this organism.</text>
</comment>
<name>ATPA_CUSOB</name>
<gene>
    <name evidence="2" type="primary">atpA</name>
</gene>
<feature type="chain" id="PRO_0000339082" description="ATP synthase subunit alpha, plastid">
    <location>
        <begin position="1"/>
        <end position="507"/>
    </location>
</feature>
<feature type="binding site" evidence="2">
    <location>
        <begin position="170"/>
        <end position="177"/>
    </location>
    <ligand>
        <name>ATP</name>
        <dbReference type="ChEBI" id="CHEBI:30616"/>
    </ligand>
</feature>
<feature type="site" description="Required for activity" evidence="2">
    <location>
        <position position="363"/>
    </location>
</feature>
<evidence type="ECO:0000250" key="1"/>
<evidence type="ECO:0000255" key="2">
    <source>
        <dbReference type="HAMAP-Rule" id="MF_01346"/>
    </source>
</evidence>
<evidence type="ECO:0000305" key="3"/>
<keyword id="KW-0066">ATP synthesis</keyword>
<keyword id="KW-0067">ATP-binding</keyword>
<keyword id="KW-0139">CF(1)</keyword>
<keyword id="KW-0375">Hydrogen ion transport</keyword>
<keyword id="KW-0406">Ion transport</keyword>
<keyword id="KW-0472">Membrane</keyword>
<keyword id="KW-0547">Nucleotide-binding</keyword>
<keyword id="KW-0934">Plastid</keyword>
<keyword id="KW-1278">Translocase</keyword>
<keyword id="KW-0813">Transport</keyword>
<proteinExistence type="inferred from homology"/>
<accession>A8W3H5</accession>
<organism>
    <name type="scientific">Cuscuta obtusiflora</name>
    <name type="common">Peruvian dodder</name>
    <dbReference type="NCBI Taxonomy" id="437280"/>
    <lineage>
        <taxon>Eukaryota</taxon>
        <taxon>Viridiplantae</taxon>
        <taxon>Streptophyta</taxon>
        <taxon>Embryophyta</taxon>
        <taxon>Tracheophyta</taxon>
        <taxon>Spermatophyta</taxon>
        <taxon>Magnoliopsida</taxon>
        <taxon>eudicotyledons</taxon>
        <taxon>Gunneridae</taxon>
        <taxon>Pentapetalae</taxon>
        <taxon>asterids</taxon>
        <taxon>lamiids</taxon>
        <taxon>Solanales</taxon>
        <taxon>Convolvulaceae</taxon>
        <taxon>Cuscuteae</taxon>
        <taxon>Cuscuta</taxon>
        <taxon>Cuscuta subgen. Grammica</taxon>
        <taxon>Cuscuta sect. Cleistogrammica</taxon>
    </lineage>
</organism>
<protein>
    <recommendedName>
        <fullName evidence="2">ATP synthase subunit alpha, plastid</fullName>
        <ecNumber evidence="2">7.1.2.2</ecNumber>
    </recommendedName>
    <alternativeName>
        <fullName evidence="2">ATP synthase F1 sector subunit alpha</fullName>
    </alternativeName>
    <alternativeName>
        <fullName evidence="2">F-ATPase subunit alpha</fullName>
    </alternativeName>
</protein>